<dbReference type="EMBL" id="CR860729">
    <property type="protein sequence ID" value="CAH92844.1"/>
    <property type="molecule type" value="mRNA"/>
</dbReference>
<dbReference type="RefSeq" id="NP_001126660.1">
    <property type="nucleotide sequence ID" value="NM_001133188.2"/>
</dbReference>
<dbReference type="RefSeq" id="XP_009248835.1">
    <property type="nucleotide sequence ID" value="XM_009250560.1"/>
</dbReference>
<dbReference type="SMR" id="Q5R5X2"/>
<dbReference type="FunCoup" id="Q5R5X2">
    <property type="interactions" value="500"/>
</dbReference>
<dbReference type="STRING" id="9601.ENSPPYP00000008140"/>
<dbReference type="Ensembl" id="ENSPPYT00000050903.1">
    <property type="protein sequence ID" value="ENSPPYP00000029392.1"/>
    <property type="gene ID" value="ENSPPYG00000007200.3"/>
</dbReference>
<dbReference type="GeneID" id="100189826"/>
<dbReference type="CTD" id="10368"/>
<dbReference type="eggNOG" id="ENOG502QVF5">
    <property type="taxonomic scope" value="Eukaryota"/>
</dbReference>
<dbReference type="GeneTree" id="ENSGT01050000244893"/>
<dbReference type="HOGENOM" id="CLU_053704_0_1_1"/>
<dbReference type="InParanoid" id="Q5R5X2"/>
<dbReference type="OMA" id="SRRCSHK"/>
<dbReference type="OrthoDB" id="9990458at2759"/>
<dbReference type="TreeFam" id="TF327980"/>
<dbReference type="Proteomes" id="UP000001595">
    <property type="component" value="Chromosome 16"/>
</dbReference>
<dbReference type="GO" id="GO:0032281">
    <property type="term" value="C:AMPA glutamate receptor complex"/>
    <property type="evidence" value="ECO:0000250"/>
    <property type="project" value="UniProtKB"/>
</dbReference>
<dbReference type="GO" id="GO:0098978">
    <property type="term" value="C:glutamatergic synapse"/>
    <property type="evidence" value="ECO:0007669"/>
    <property type="project" value="Ensembl"/>
</dbReference>
<dbReference type="GO" id="GO:0098839">
    <property type="term" value="C:postsynaptic density membrane"/>
    <property type="evidence" value="ECO:0007669"/>
    <property type="project" value="Ensembl"/>
</dbReference>
<dbReference type="GO" id="GO:0098685">
    <property type="term" value="C:Schaffer collateral - CA1 synapse"/>
    <property type="evidence" value="ECO:0007669"/>
    <property type="project" value="Ensembl"/>
</dbReference>
<dbReference type="GO" id="GO:0036477">
    <property type="term" value="C:somatodendritic compartment"/>
    <property type="evidence" value="ECO:0000250"/>
    <property type="project" value="UniProtKB"/>
</dbReference>
<dbReference type="GO" id="GO:0016247">
    <property type="term" value="F:channel regulator activity"/>
    <property type="evidence" value="ECO:0007669"/>
    <property type="project" value="TreeGrafter"/>
</dbReference>
<dbReference type="GO" id="GO:0005245">
    <property type="term" value="F:voltage-gated calcium channel activity"/>
    <property type="evidence" value="ECO:0007669"/>
    <property type="project" value="TreeGrafter"/>
</dbReference>
<dbReference type="GO" id="GO:0099590">
    <property type="term" value="P:neurotransmitter receptor internalization"/>
    <property type="evidence" value="ECO:0007669"/>
    <property type="project" value="TreeGrafter"/>
</dbReference>
<dbReference type="GO" id="GO:0099645">
    <property type="term" value="P:neurotransmitter receptor localization to postsynaptic specialization membrane"/>
    <property type="evidence" value="ECO:0007669"/>
    <property type="project" value="Ensembl"/>
</dbReference>
<dbReference type="GO" id="GO:0098943">
    <property type="term" value="P:neurotransmitter receptor transport, postsynaptic endosome to lysosome"/>
    <property type="evidence" value="ECO:0007669"/>
    <property type="project" value="TreeGrafter"/>
</dbReference>
<dbReference type="GO" id="GO:0051968">
    <property type="term" value="P:positive regulation of synaptic transmission, glutamatergic"/>
    <property type="evidence" value="ECO:0007669"/>
    <property type="project" value="TreeGrafter"/>
</dbReference>
<dbReference type="GO" id="GO:0098970">
    <property type="term" value="P:postsynaptic neurotransmitter receptor diffusion trapping"/>
    <property type="evidence" value="ECO:0007669"/>
    <property type="project" value="TreeGrafter"/>
</dbReference>
<dbReference type="GO" id="GO:0008104">
    <property type="term" value="P:protein localization"/>
    <property type="evidence" value="ECO:0000250"/>
    <property type="project" value="UniProtKB"/>
</dbReference>
<dbReference type="GO" id="GO:0006605">
    <property type="term" value="P:protein targeting"/>
    <property type="evidence" value="ECO:0000250"/>
    <property type="project" value="UniProtKB"/>
</dbReference>
<dbReference type="GO" id="GO:2000311">
    <property type="term" value="P:regulation of AMPA receptor activity"/>
    <property type="evidence" value="ECO:0000250"/>
    <property type="project" value="UniProtKB"/>
</dbReference>
<dbReference type="GO" id="GO:0019226">
    <property type="term" value="P:transmission of nerve impulse"/>
    <property type="evidence" value="ECO:0007669"/>
    <property type="project" value="TreeGrafter"/>
</dbReference>
<dbReference type="FunFam" id="1.20.140.150:FF:000002">
    <property type="entry name" value="Voltage-dependent calcium channel gamma-2 subunit"/>
    <property type="match status" value="1"/>
</dbReference>
<dbReference type="Gene3D" id="1.20.140.150">
    <property type="match status" value="1"/>
</dbReference>
<dbReference type="InterPro" id="IPR051072">
    <property type="entry name" value="CACNG_subunit"/>
</dbReference>
<dbReference type="InterPro" id="IPR004031">
    <property type="entry name" value="PMP22/EMP/MP20/Claudin"/>
</dbReference>
<dbReference type="InterPro" id="IPR008368">
    <property type="entry name" value="VDCC_gsu"/>
</dbReference>
<dbReference type="PANTHER" id="PTHR12107">
    <property type="entry name" value="VOLTAGE-DEPENDENT CALCIUM CHANNEL GAMMA SUBUNIT"/>
    <property type="match status" value="1"/>
</dbReference>
<dbReference type="PANTHER" id="PTHR12107:SF5">
    <property type="entry name" value="VOLTAGE-DEPENDENT CALCIUM CHANNEL GAMMA-3 SUBUNIT"/>
    <property type="match status" value="1"/>
</dbReference>
<dbReference type="Pfam" id="PF00822">
    <property type="entry name" value="PMP22_Claudin"/>
    <property type="match status" value="1"/>
</dbReference>
<dbReference type="PRINTS" id="PR01792">
    <property type="entry name" value="VDCCGAMMA"/>
</dbReference>
<proteinExistence type="evidence at transcript level"/>
<sequence>MRMCDRGIQMLITTVGAFAAFSLMTIAVGTDYWLYSRGVCRTKSTSDNETSRKNEEVMTHSGLWRTCCLEGAFRGVCKKIDHFPEDADYEQDTAEYLLRAVRASSVFPILSVTLLFFGGLCVAASEFHRSRHNVILSAGIFFVSAGLSNIIGIIVYISANAGDPGQRDSKKSYSYGWSFYFGAFSFIIAEIVGVVAVHIYIEKHQQLRAKSHSEFLKKSTFARLPPYRYRFRRRSSSRSTEPRSRDLSPISKGFHTIPSTDISMFTLSRDPSKITMGTLLNSDRDHAFLQFHNSTPKEFKESLHNNPANRRTTPV</sequence>
<accession>Q5R5X2</accession>
<comment type="function">
    <text evidence="2">Regulates the trafficking to the somatodendritic compartment and gating properties of AMPA-selective glutamate receptors (AMPARs). Promotes their targeting to the cell membrane and synapses and modulates their gating properties by slowing their rates of activation, deactivation and desensitization. Does not show subunit-specific AMPA receptor regulation and regulates all AMPAR subunits. Thought to stabilize the calcium channel in an inactivated (closed) state.</text>
</comment>
<comment type="subunit">
    <text evidence="1 2 3">The L-type calcium channel is composed of five subunits: alpha-1, alpha-2/delta, beta and gamma. Acts as an auxiliary subunit for AMPA-selective glutamate receptors (AMPARs). Found in a complex with GRIA1, GRIA2, GRIA3, GRIA4, CNIH2, CNIH3, CACNG2, CACNG4, CACNG5, CACNG7 and CACNG8 (By similarity). Interacts with AP4M1 and GRIA1; associates GRIA1 with the adaptor protein complex 4 (AP-4) to target GRIA1 to the somatodendritic compartment of neurons (By similarity).</text>
</comment>
<comment type="subcellular location">
    <subcellularLocation>
        <location evidence="4">Membrane</location>
        <topology evidence="4">Multi-pass membrane protein</topology>
    </subcellularLocation>
    <text evidence="3">Displays a somatodendritic localization and is excluded from axons in neurons.</text>
</comment>
<comment type="similarity">
    <text evidence="5">Belongs to the PMP-22/EMP/MP20 family. CACNG subfamily.</text>
</comment>
<gene>
    <name type="primary">CACNG3</name>
</gene>
<organism>
    <name type="scientific">Pongo abelii</name>
    <name type="common">Sumatran orangutan</name>
    <name type="synonym">Pongo pygmaeus abelii</name>
    <dbReference type="NCBI Taxonomy" id="9601"/>
    <lineage>
        <taxon>Eukaryota</taxon>
        <taxon>Metazoa</taxon>
        <taxon>Chordata</taxon>
        <taxon>Craniata</taxon>
        <taxon>Vertebrata</taxon>
        <taxon>Euteleostomi</taxon>
        <taxon>Mammalia</taxon>
        <taxon>Eutheria</taxon>
        <taxon>Euarchontoglires</taxon>
        <taxon>Primates</taxon>
        <taxon>Haplorrhini</taxon>
        <taxon>Catarrhini</taxon>
        <taxon>Hominidae</taxon>
        <taxon>Pongo</taxon>
    </lineage>
</organism>
<keyword id="KW-0106">Calcium</keyword>
<keyword id="KW-0107">Calcium channel</keyword>
<keyword id="KW-0109">Calcium transport</keyword>
<keyword id="KW-0407">Ion channel</keyword>
<keyword id="KW-0406">Ion transport</keyword>
<keyword id="KW-0472">Membrane</keyword>
<keyword id="KW-0597">Phosphoprotein</keyword>
<keyword id="KW-1185">Reference proteome</keyword>
<keyword id="KW-0812">Transmembrane</keyword>
<keyword id="KW-1133">Transmembrane helix</keyword>
<keyword id="KW-0813">Transport</keyword>
<keyword id="KW-0851">Voltage-gated channel</keyword>
<protein>
    <recommendedName>
        <fullName>Voltage-dependent calcium channel gamma-3 subunit</fullName>
    </recommendedName>
    <alternativeName>
        <fullName>Neuronal voltage-gated calcium channel gamma-3 subunit</fullName>
    </alternativeName>
    <alternativeName>
        <fullName>Transmembrane AMPAR regulatory protein gamma-3</fullName>
        <shortName>TARP gamma-3</shortName>
    </alternativeName>
</protein>
<evidence type="ECO:0000250" key="1"/>
<evidence type="ECO:0000250" key="2">
    <source>
        <dbReference type="UniProtKB" id="Q8VHX0"/>
    </source>
</evidence>
<evidence type="ECO:0000250" key="3">
    <source>
        <dbReference type="UniProtKB" id="Q9JJV5"/>
    </source>
</evidence>
<evidence type="ECO:0000255" key="4"/>
<evidence type="ECO:0000305" key="5"/>
<reference key="1">
    <citation type="submission" date="2004-11" db="EMBL/GenBank/DDBJ databases">
        <authorList>
            <consortium name="The German cDNA consortium"/>
        </authorList>
    </citation>
    <scope>NUCLEOTIDE SEQUENCE [LARGE SCALE MRNA]</scope>
    <source>
        <tissue>Brain cortex</tissue>
    </source>
</reference>
<name>CCG3_PONAB</name>
<feature type="chain" id="PRO_0000261027" description="Voltage-dependent calcium channel gamma-3 subunit">
    <location>
        <begin position="1"/>
        <end position="315"/>
    </location>
</feature>
<feature type="transmembrane region" description="Helical" evidence="4">
    <location>
        <begin position="8"/>
        <end position="28"/>
    </location>
</feature>
<feature type="transmembrane region" description="Helical" evidence="4">
    <location>
        <begin position="104"/>
        <end position="124"/>
    </location>
</feature>
<feature type="transmembrane region" description="Helical" evidence="4">
    <location>
        <begin position="135"/>
        <end position="155"/>
    </location>
</feature>
<feature type="transmembrane region" description="Helical" evidence="4">
    <location>
        <begin position="181"/>
        <end position="201"/>
    </location>
</feature>
<feature type="modified residue" description="Phosphoserine" evidence="2">
    <location>
        <position position="248"/>
    </location>
</feature>